<accession>Q8ZWT5</accession>
<comment type="function">
    <text evidence="1">Dimethylates a single guanine residue at position 26 of a number of tRNAs using S-adenosyl-L-methionine as donor of the methyl groups.</text>
</comment>
<comment type="catalytic activity">
    <reaction evidence="1">
        <text>guanosine(26) in tRNA + 2 S-adenosyl-L-methionine = N(2)-dimethylguanosine(26) in tRNA + 2 S-adenosyl-L-homocysteine + 2 H(+)</text>
        <dbReference type="Rhea" id="RHEA:43140"/>
        <dbReference type="Rhea" id="RHEA-COMP:10359"/>
        <dbReference type="Rhea" id="RHEA-COMP:10360"/>
        <dbReference type="ChEBI" id="CHEBI:15378"/>
        <dbReference type="ChEBI" id="CHEBI:57856"/>
        <dbReference type="ChEBI" id="CHEBI:59789"/>
        <dbReference type="ChEBI" id="CHEBI:74269"/>
        <dbReference type="ChEBI" id="CHEBI:74513"/>
        <dbReference type="EC" id="2.1.1.216"/>
    </reaction>
</comment>
<comment type="similarity">
    <text evidence="1">Belongs to the class I-like SAM-binding methyltransferase superfamily. Trm1 family.</text>
</comment>
<sequence length="363" mass="40108">MRHLVLRREGGVKFYAPDPEKYGGIYSAPVFYNPAMEKNRTLSTLLLKAYGKGGLVVCEPLSGTGVRGIRYAVESGVVGKLILNDISKEAVELIKKNLEINGVDAEVYNEDANVLLHKLKDSCDVVDIDPFGSPAPFIHGAFRALKEEGLICATATDTAVLVGRYPRKCLRRYGSVIVKTPFYIEVGLRNLLGYIARVAAAEDYKITPLMSYWEGHYFRVCAYAARGARDADDNFHHIAYIKYERGVRKILHAQSEGSSGPLWVGPLGDPLIINKMSEIGPYQDFLKILAEEYSISAPWFYRLPEFAAGGKSPTLKEAVGVLRAAGIYAVRTHMAPDGFKADGEYGEVLMAFKRYISSAHSLQ</sequence>
<feature type="chain" id="PRO_0000147688" description="tRNA (guanine(26)-N(2))-dimethyltransferase">
    <location>
        <begin position="1"/>
        <end position="363"/>
    </location>
</feature>
<feature type="domain" description="Trm1 methyltransferase" evidence="1">
    <location>
        <begin position="5"/>
        <end position="352"/>
    </location>
</feature>
<feature type="binding site" evidence="1">
    <location>
        <position position="40"/>
    </location>
    <ligand>
        <name>S-adenosyl-L-methionine</name>
        <dbReference type="ChEBI" id="CHEBI:59789"/>
    </ligand>
</feature>
<feature type="binding site" evidence="1">
    <location>
        <position position="67"/>
    </location>
    <ligand>
        <name>S-adenosyl-L-methionine</name>
        <dbReference type="ChEBI" id="CHEBI:59789"/>
    </ligand>
</feature>
<feature type="binding site" evidence="1">
    <location>
        <position position="85"/>
    </location>
    <ligand>
        <name>S-adenosyl-L-methionine</name>
        <dbReference type="ChEBI" id="CHEBI:59789"/>
    </ligand>
</feature>
<feature type="binding site" evidence="1">
    <location>
        <position position="111"/>
    </location>
    <ligand>
        <name>S-adenosyl-L-methionine</name>
        <dbReference type="ChEBI" id="CHEBI:59789"/>
    </ligand>
</feature>
<feature type="binding site" evidence="1">
    <location>
        <position position="112"/>
    </location>
    <ligand>
        <name>S-adenosyl-L-methionine</name>
        <dbReference type="ChEBI" id="CHEBI:59789"/>
    </ligand>
</feature>
<organism>
    <name type="scientific">Pyrobaculum aerophilum (strain ATCC 51768 / DSM 7523 / JCM 9630 / CIP 104966 / NBRC 100827 / IM2)</name>
    <dbReference type="NCBI Taxonomy" id="178306"/>
    <lineage>
        <taxon>Archaea</taxon>
        <taxon>Thermoproteota</taxon>
        <taxon>Thermoprotei</taxon>
        <taxon>Thermoproteales</taxon>
        <taxon>Thermoproteaceae</taxon>
        <taxon>Pyrobaculum</taxon>
    </lineage>
</organism>
<gene>
    <name evidence="1" type="primary">trm1</name>
    <name type="ordered locus">PAE1628</name>
</gene>
<reference key="1">
    <citation type="journal article" date="2002" name="Proc. Natl. Acad. Sci. U.S.A.">
        <title>Genome sequence of the hyperthermophilic crenarchaeon Pyrobaculum aerophilum.</title>
        <authorList>
            <person name="Fitz-Gibbon S.T."/>
            <person name="Ladner H."/>
            <person name="Kim U.-J."/>
            <person name="Stetter K.O."/>
            <person name="Simon M.I."/>
            <person name="Miller J.H."/>
        </authorList>
    </citation>
    <scope>NUCLEOTIDE SEQUENCE [LARGE SCALE GENOMIC DNA]</scope>
    <source>
        <strain>ATCC 51768 / DSM 7523 / JCM 9630 / CIP 104966 / NBRC 100827 / IM2</strain>
    </source>
</reference>
<proteinExistence type="inferred from homology"/>
<keyword id="KW-0489">Methyltransferase</keyword>
<keyword id="KW-1185">Reference proteome</keyword>
<keyword id="KW-0694">RNA-binding</keyword>
<keyword id="KW-0949">S-adenosyl-L-methionine</keyword>
<keyword id="KW-0808">Transferase</keyword>
<keyword id="KW-0819">tRNA processing</keyword>
<keyword id="KW-0820">tRNA-binding</keyword>
<name>TRM1_PYRAE</name>
<dbReference type="EC" id="2.1.1.216" evidence="1"/>
<dbReference type="EMBL" id="AE009441">
    <property type="protein sequence ID" value="AAL63614.1"/>
    <property type="molecule type" value="Genomic_DNA"/>
</dbReference>
<dbReference type="RefSeq" id="WP_011008087.1">
    <property type="nucleotide sequence ID" value="NC_003364.1"/>
</dbReference>
<dbReference type="SMR" id="Q8ZWT5"/>
<dbReference type="FunCoup" id="Q8ZWT5">
    <property type="interactions" value="222"/>
</dbReference>
<dbReference type="STRING" id="178306.PAE1628"/>
<dbReference type="EnsemblBacteria" id="AAL63614">
    <property type="protein sequence ID" value="AAL63614"/>
    <property type="gene ID" value="PAE1628"/>
</dbReference>
<dbReference type="GeneID" id="1465863"/>
<dbReference type="KEGG" id="pai:PAE1628"/>
<dbReference type="PATRIC" id="fig|178306.9.peg.1203"/>
<dbReference type="eggNOG" id="arCOG01219">
    <property type="taxonomic scope" value="Archaea"/>
</dbReference>
<dbReference type="HOGENOM" id="CLU_010862_5_1_2"/>
<dbReference type="InParanoid" id="Q8ZWT5"/>
<dbReference type="Proteomes" id="UP000002439">
    <property type="component" value="Chromosome"/>
</dbReference>
<dbReference type="GO" id="GO:0160104">
    <property type="term" value="F:tRNA (guanine(26)-N2)-dimethyltransferase activity"/>
    <property type="evidence" value="ECO:0007669"/>
    <property type="project" value="UniProtKB-UniRule"/>
</dbReference>
<dbReference type="GO" id="GO:0000049">
    <property type="term" value="F:tRNA binding"/>
    <property type="evidence" value="ECO:0007669"/>
    <property type="project" value="UniProtKB-KW"/>
</dbReference>
<dbReference type="GO" id="GO:0002940">
    <property type="term" value="P:tRNA N2-guanine methylation"/>
    <property type="evidence" value="ECO:0000318"/>
    <property type="project" value="GO_Central"/>
</dbReference>
<dbReference type="CDD" id="cd02440">
    <property type="entry name" value="AdoMet_MTases"/>
    <property type="match status" value="1"/>
</dbReference>
<dbReference type="Gene3D" id="3.30.56.70">
    <property type="entry name" value="N2,N2-dimethylguanosine tRNA methyltransferase, C-terminal domain"/>
    <property type="match status" value="1"/>
</dbReference>
<dbReference type="Gene3D" id="3.40.50.150">
    <property type="entry name" value="Vaccinia Virus protein VP39"/>
    <property type="match status" value="1"/>
</dbReference>
<dbReference type="HAMAP" id="MF_00290">
    <property type="entry name" value="tRNA_dimethyltr_TRM1"/>
    <property type="match status" value="1"/>
</dbReference>
<dbReference type="InterPro" id="IPR029063">
    <property type="entry name" value="SAM-dependent_MTases_sf"/>
</dbReference>
<dbReference type="InterPro" id="IPR002905">
    <property type="entry name" value="Trm1"/>
</dbReference>
<dbReference type="InterPro" id="IPR022923">
    <property type="entry name" value="TRM1_arc_bac"/>
</dbReference>
<dbReference type="InterPro" id="IPR042296">
    <property type="entry name" value="tRNA_met_Trm1_C"/>
</dbReference>
<dbReference type="PANTHER" id="PTHR10631">
    <property type="entry name" value="N 2 ,N 2 -DIMETHYLGUANOSINE TRNA METHYLTRANSFERASE"/>
    <property type="match status" value="1"/>
</dbReference>
<dbReference type="PANTHER" id="PTHR10631:SF3">
    <property type="entry name" value="TRNA (GUANINE(26)-N(2))-DIMETHYLTRANSFERASE"/>
    <property type="match status" value="1"/>
</dbReference>
<dbReference type="Pfam" id="PF02005">
    <property type="entry name" value="TRM"/>
    <property type="match status" value="1"/>
</dbReference>
<dbReference type="SUPFAM" id="SSF53335">
    <property type="entry name" value="S-adenosyl-L-methionine-dependent methyltransferases"/>
    <property type="match status" value="1"/>
</dbReference>
<dbReference type="PROSITE" id="PS51626">
    <property type="entry name" value="SAM_MT_TRM1"/>
    <property type="match status" value="1"/>
</dbReference>
<protein>
    <recommendedName>
        <fullName evidence="1">tRNA (guanine(26)-N(2))-dimethyltransferase</fullName>
        <ecNumber evidence="1">2.1.1.216</ecNumber>
    </recommendedName>
    <alternativeName>
        <fullName evidence="1">tRNA 2,2-dimethylguanosine-26 methyltransferase</fullName>
    </alternativeName>
    <alternativeName>
        <fullName evidence="1">tRNA(guanine-26,N(2)-N(2)) methyltransferase</fullName>
    </alternativeName>
    <alternativeName>
        <fullName evidence="1">tRNA(m(2,2)G26)dimethyltransferase</fullName>
    </alternativeName>
</protein>
<evidence type="ECO:0000255" key="1">
    <source>
        <dbReference type="HAMAP-Rule" id="MF_00290"/>
    </source>
</evidence>